<evidence type="ECO:0000250" key="1">
    <source>
        <dbReference type="UniProtKB" id="Q15041"/>
    </source>
</evidence>
<evidence type="ECO:0000250" key="2">
    <source>
        <dbReference type="UniProtKB" id="Q9JKW0"/>
    </source>
</evidence>
<evidence type="ECO:0000255" key="3"/>
<evidence type="ECO:0000305" key="4"/>
<gene>
    <name type="primary">ARL6IP1</name>
    <name type="synonym">ARL6IP</name>
</gene>
<dbReference type="EMBL" id="CR861404">
    <property type="protein sequence ID" value="CAH93462.1"/>
    <property type="molecule type" value="mRNA"/>
</dbReference>
<dbReference type="RefSeq" id="NP_001127029.1">
    <property type="nucleotide sequence ID" value="NM_001133557.2"/>
</dbReference>
<dbReference type="FunCoup" id="Q5R454">
    <property type="interactions" value="1950"/>
</dbReference>
<dbReference type="STRING" id="9601.ENSPPYP00000008071"/>
<dbReference type="Ensembl" id="ENSPPYT00000008406.2">
    <property type="protein sequence ID" value="ENSPPYP00000008071.1"/>
    <property type="gene ID" value="ENSPPYG00000007140.2"/>
</dbReference>
<dbReference type="GeneID" id="100174054"/>
<dbReference type="KEGG" id="pon:100174054"/>
<dbReference type="CTD" id="23204"/>
<dbReference type="eggNOG" id="ENOG502QTTI">
    <property type="taxonomic scope" value="Eukaryota"/>
</dbReference>
<dbReference type="GeneTree" id="ENSGT00940000154937"/>
<dbReference type="HOGENOM" id="CLU_100749_0_0_1"/>
<dbReference type="InParanoid" id="Q5R454"/>
<dbReference type="OMA" id="WTGQKEK"/>
<dbReference type="OrthoDB" id="6416122at2759"/>
<dbReference type="TreeFam" id="TF105477"/>
<dbReference type="Proteomes" id="UP000001595">
    <property type="component" value="Unplaced"/>
</dbReference>
<dbReference type="GO" id="GO:0005783">
    <property type="term" value="C:endoplasmic reticulum"/>
    <property type="evidence" value="ECO:0000250"/>
    <property type="project" value="UniProtKB"/>
</dbReference>
<dbReference type="GO" id="GO:0005789">
    <property type="term" value="C:endoplasmic reticulum membrane"/>
    <property type="evidence" value="ECO:0000250"/>
    <property type="project" value="UniProtKB"/>
</dbReference>
<dbReference type="GO" id="GO:0005784">
    <property type="term" value="C:Sec61 translocon complex"/>
    <property type="evidence" value="ECO:0007669"/>
    <property type="project" value="TreeGrafter"/>
</dbReference>
<dbReference type="GO" id="GO:0006915">
    <property type="term" value="P:apoptotic process"/>
    <property type="evidence" value="ECO:0007669"/>
    <property type="project" value="UniProtKB-KW"/>
</dbReference>
<dbReference type="GO" id="GO:0006613">
    <property type="term" value="P:cotranslational protein targeting to membrane"/>
    <property type="evidence" value="ECO:0007669"/>
    <property type="project" value="TreeGrafter"/>
</dbReference>
<dbReference type="GO" id="GO:0071787">
    <property type="term" value="P:endoplasmic reticulum tubular network formation"/>
    <property type="evidence" value="ECO:0000250"/>
    <property type="project" value="UniProtKB"/>
</dbReference>
<dbReference type="GO" id="GO:1990809">
    <property type="term" value="P:endoplasmic reticulum tubular network membrane organization"/>
    <property type="evidence" value="ECO:0000250"/>
    <property type="project" value="UniProtKB"/>
</dbReference>
<dbReference type="GO" id="GO:0043066">
    <property type="term" value="P:negative regulation of apoptotic process"/>
    <property type="evidence" value="ECO:0000250"/>
    <property type="project" value="UniProtKB"/>
</dbReference>
<dbReference type="GO" id="GO:0002038">
    <property type="term" value="P:positive regulation of L-glutamate import across plasma membrane"/>
    <property type="evidence" value="ECO:0000250"/>
    <property type="project" value="UniProtKB"/>
</dbReference>
<dbReference type="CDD" id="cd22559">
    <property type="entry name" value="Arl6IP1"/>
    <property type="match status" value="1"/>
</dbReference>
<dbReference type="InterPro" id="IPR052114">
    <property type="entry name" value="ER_autophagy_membrane_reg"/>
</dbReference>
<dbReference type="PANTHER" id="PTHR20952:SF0">
    <property type="entry name" value="ADP-RIBOSYLATION FACTOR-LIKE PROTEIN 6-INTERACTING PROTEIN 1"/>
    <property type="match status" value="1"/>
</dbReference>
<dbReference type="PANTHER" id="PTHR20952">
    <property type="entry name" value="ADP-RIBOSYLATION-LIKE FACTOR 6-INTERACTING PROTEIN"/>
    <property type="match status" value="1"/>
</dbReference>
<dbReference type="Pfam" id="PF24456">
    <property type="entry name" value="RHD_RETREG1-3"/>
    <property type="match status" value="1"/>
</dbReference>
<reference key="1">
    <citation type="submission" date="2004-11" db="EMBL/GenBank/DDBJ databases">
        <authorList>
            <consortium name="The German cDNA consortium"/>
        </authorList>
    </citation>
    <scope>NUCLEOTIDE SEQUENCE [LARGE SCALE MRNA]</scope>
    <source>
        <tissue>Brain cortex</tissue>
    </source>
</reference>
<protein>
    <recommendedName>
        <fullName>ADP-ribosylation factor-like protein 6-interacting protein 1</fullName>
        <shortName>ARL-6-interacting protein 1</shortName>
        <shortName>Aip-1</shortName>
    </recommendedName>
    <alternativeName>
        <fullName>Protein TBX2</fullName>
    </alternativeName>
</protein>
<proteinExistence type="evidence at transcript level"/>
<accession>Q5R454</accession>
<feature type="chain" id="PRO_0000064657" description="ADP-ribosylation factor-like protein 6-interacting protein 1">
    <location>
        <begin position="1"/>
        <end position="203"/>
    </location>
</feature>
<feature type="topological domain" description="Cytoplasmic" evidence="3">
    <location>
        <begin position="1"/>
        <end position="41"/>
    </location>
</feature>
<feature type="transmembrane region" description="Helical" evidence="3">
    <location>
        <begin position="42"/>
        <end position="62"/>
    </location>
</feature>
<feature type="topological domain" description="Lumenal" evidence="3">
    <location>
        <begin position="63"/>
        <end position="65"/>
    </location>
</feature>
<feature type="transmembrane region" description="Helical" evidence="3">
    <location>
        <begin position="66"/>
        <end position="86"/>
    </location>
</feature>
<feature type="topological domain" description="Cytoplasmic" evidence="3">
    <location>
        <begin position="87"/>
        <end position="133"/>
    </location>
</feature>
<feature type="transmembrane region" description="Helical" evidence="3">
    <location>
        <begin position="134"/>
        <end position="175"/>
    </location>
</feature>
<feature type="topological domain" description="Lumenal" evidence="3">
    <location>
        <begin position="176"/>
        <end position="203"/>
    </location>
</feature>
<keyword id="KW-0053">Apoptosis</keyword>
<keyword id="KW-0256">Endoplasmic reticulum</keyword>
<keyword id="KW-0472">Membrane</keyword>
<keyword id="KW-1185">Reference proteome</keyword>
<keyword id="KW-0812">Transmembrane</keyword>
<keyword id="KW-1133">Transmembrane helix</keyword>
<organism>
    <name type="scientific">Pongo abelii</name>
    <name type="common">Sumatran orangutan</name>
    <name type="synonym">Pongo pygmaeus abelii</name>
    <dbReference type="NCBI Taxonomy" id="9601"/>
    <lineage>
        <taxon>Eukaryota</taxon>
        <taxon>Metazoa</taxon>
        <taxon>Chordata</taxon>
        <taxon>Craniata</taxon>
        <taxon>Vertebrata</taxon>
        <taxon>Euteleostomi</taxon>
        <taxon>Mammalia</taxon>
        <taxon>Eutheria</taxon>
        <taxon>Euarchontoglires</taxon>
        <taxon>Primates</taxon>
        <taxon>Haplorrhini</taxon>
        <taxon>Catarrhini</taxon>
        <taxon>Hominidae</taxon>
        <taxon>Pongo</taxon>
    </lineage>
</organism>
<sequence length="203" mass="23323">MAEGDNRSSNLLAAETASLEEQLQGWGEVMLMADKVLRWERAWFPPAIMGVVSLVFLIIYYLDPSVLSGVSCFVMFLCLADYLVPILAPRIFGSNKWTTEQQQRFHEICSNLVKTRRRAVGWWKRLFTLKEEKPKMYFMTMIVSLAAVAWVGQQVHNLLLTYLIVTSLLLLPGLNQHGIISKYIGMAKREINKLLKQKEKKNE</sequence>
<name>AR6P1_PONAB</name>
<comment type="function">
    <text evidence="1 2">Positively regulates SLC1A1/EAAC1-mediated glutamate transport by increasing its affinity for glutamate in a PKC activity-dependent manner. Promotes the catalytic efficiency of SLC1A1/EAAC1 probably by reducing its interaction with ARL6IP5, a negative regulator of SLC1A1/EAAC1-mediated glutamate transport. Plays a role in the formation and stabilization of endoplasmic reticulum tubules. Negatively regulates apoptosis, possibly by modulating the activity of caspase-9 (CASP9). Inhibits cleavage of CASP9-dependent substrates and downstream markers of apoptosis but not CASP9 itself. May be involved in protein transport, membrane trafficking, or cell signaling during hematopoietic maturation.</text>
</comment>
<comment type="subunit">
    <text evidence="1 2">Homooligomer. Heterodimer with ARL6IP5. Interacts with ATL1, TMEM33 and ARL6.</text>
</comment>
<comment type="subcellular location">
    <subcellularLocation>
        <location evidence="1">Endomembrane system</location>
        <topology evidence="3">Multi-pass membrane protein</topology>
    </subcellularLocation>
    <subcellularLocation>
        <location evidence="1">Endoplasmic reticulum membrane</location>
        <topology evidence="3">Multi-pass membrane protein</topology>
    </subcellularLocation>
    <subcellularLocation>
        <location evidence="2">Endoplasmic reticulum</location>
    </subcellularLocation>
    <text evidence="1">Predominantly localized to intracytoplasmic membranes. Preferentially localizes at the ER tubules and the edge of the ER sheets, both of which are characterized by a high membrane curvature.</text>
</comment>
<comment type="domain">
    <text evidence="1">The transmembrane domains are required for its ability to shape the endoplasmic reticulum membrane into tubules.</text>
</comment>
<comment type="similarity">
    <text evidence="4">Belongs to the ARL6ip family.</text>
</comment>